<keyword id="KW-1003">Cell membrane</keyword>
<keyword id="KW-0472">Membrane</keyword>
<keyword id="KW-1185">Reference proteome</keyword>
<keyword id="KW-0812">Transmembrane</keyword>
<keyword id="KW-1133">Transmembrane helix</keyword>
<dbReference type="EMBL" id="BC081055">
    <property type="protein sequence ID" value="AAH81055.1"/>
    <property type="molecule type" value="mRNA"/>
</dbReference>
<dbReference type="RefSeq" id="NP_001087661.1">
    <property type="nucleotide sequence ID" value="NM_001094192.1"/>
</dbReference>
<dbReference type="SMR" id="Q66J54"/>
<dbReference type="DNASU" id="447485"/>
<dbReference type="GeneID" id="447485"/>
<dbReference type="KEGG" id="xla:447485"/>
<dbReference type="AGR" id="Xenbase:XB-GENE-22061136"/>
<dbReference type="CTD" id="447485"/>
<dbReference type="Xenbase" id="XB-GENE-22061136">
    <property type="gene designation" value="slc22a8.S"/>
</dbReference>
<dbReference type="OrthoDB" id="2544694at2759"/>
<dbReference type="Proteomes" id="UP000186698">
    <property type="component" value="Chromosome 4S"/>
</dbReference>
<dbReference type="Bgee" id="447485">
    <property type="expression patterns" value="Expressed in kidney and 2 other cell types or tissues"/>
</dbReference>
<dbReference type="GO" id="GO:0009925">
    <property type="term" value="C:basal plasma membrane"/>
    <property type="evidence" value="ECO:0000250"/>
    <property type="project" value="UniProtKB"/>
</dbReference>
<dbReference type="GO" id="GO:0016323">
    <property type="term" value="C:basolateral plasma membrane"/>
    <property type="evidence" value="ECO:0007669"/>
    <property type="project" value="UniProtKB-SubCell"/>
</dbReference>
<dbReference type="GO" id="GO:0022857">
    <property type="term" value="F:transmembrane transporter activity"/>
    <property type="evidence" value="ECO:0007669"/>
    <property type="project" value="InterPro"/>
</dbReference>
<dbReference type="CDD" id="cd17446">
    <property type="entry name" value="MFS_SLC22A6_OAT1_like"/>
    <property type="match status" value="1"/>
</dbReference>
<dbReference type="FunFam" id="1.20.1250.20:FF:000023">
    <property type="entry name" value="Solute carrier family 22 member 6"/>
    <property type="match status" value="1"/>
</dbReference>
<dbReference type="Gene3D" id="1.20.1250.20">
    <property type="entry name" value="MFS general substrate transporter like domains"/>
    <property type="match status" value="1"/>
</dbReference>
<dbReference type="InterPro" id="IPR020846">
    <property type="entry name" value="MFS_dom"/>
</dbReference>
<dbReference type="InterPro" id="IPR005828">
    <property type="entry name" value="MFS_sugar_transport-like"/>
</dbReference>
<dbReference type="InterPro" id="IPR036259">
    <property type="entry name" value="MFS_trans_sf"/>
</dbReference>
<dbReference type="InterPro" id="IPR004749">
    <property type="entry name" value="Orgcat_transp/SVOP"/>
</dbReference>
<dbReference type="InterPro" id="IPR005829">
    <property type="entry name" value="Sugar_transporter_CS"/>
</dbReference>
<dbReference type="NCBIfam" id="TIGR00898">
    <property type="entry name" value="2A0119"/>
    <property type="match status" value="1"/>
</dbReference>
<dbReference type="PANTHER" id="PTHR24064">
    <property type="entry name" value="SOLUTE CARRIER FAMILY 22 MEMBER"/>
    <property type="match status" value="1"/>
</dbReference>
<dbReference type="Pfam" id="PF00083">
    <property type="entry name" value="Sugar_tr"/>
    <property type="match status" value="1"/>
</dbReference>
<dbReference type="SUPFAM" id="SSF103473">
    <property type="entry name" value="MFS general substrate transporter"/>
    <property type="match status" value="1"/>
</dbReference>
<dbReference type="PROSITE" id="PS50850">
    <property type="entry name" value="MFS"/>
    <property type="match status" value="1"/>
</dbReference>
<reference key="1">
    <citation type="submission" date="2004-08" db="EMBL/GenBank/DDBJ databases">
        <authorList>
            <consortium name="NIH - Xenopus Gene Collection (XGC) project"/>
        </authorList>
    </citation>
    <scope>NUCLEOTIDE SEQUENCE [LARGE SCALE MRNA]</scope>
    <source>
        <tissue>Kidney</tissue>
    </source>
</reference>
<sequence length="558" mass="62453">MSFAELLERTGGMGRFQITQVALMCFPILLMASHNLLQNFSAAIPDHKCKANDTWYQSNNTDRMGYVRLSAPLDADGQPDRCLEYVEVQWMIAGTNRTWANSSQLATRPCTEGWEYSKDEFNSTIITEWDLVCGHKNRRQLAQSVYMGGVLVGAIILGGLSDRYGRRALLIWSYFQMAVSGLCSAFSPNYLSYCIFRFLTGMALSGIGLNTTALIVEWVPTRVRTITGTLAGFSYTVGQLLLAGLAYAMRDWRWLQLCVSLPFFIFFLYSWWFPESARWLVLSGKTERAVKEMKKVAKLNGKEEEGEKITLESMRSDMIKELACAKSSYTVIDLIRTSTIRRISCALSLVWFSTSFAYYGLAMDLQNFNVSIYLIQVIFGAVDFPAKIFSTTAMIYVGRKFTQLMSLILGGVVILANSFVPHEMQTVRTGMAVFGKGCLAASFSCVFLYTTELYPTVIRQSGLGLCSTMARIGGIVAPLVKILGEYYPFLPLVIYGGAPIISGLCVFFLPETVNKPLPDTIEEVEKRIKAPKKENEMNEIVSLKKKEGMKENPVNDVL</sequence>
<proteinExistence type="evidence at transcript level"/>
<organism>
    <name type="scientific">Xenopus laevis</name>
    <name type="common">African clawed frog</name>
    <dbReference type="NCBI Taxonomy" id="8355"/>
    <lineage>
        <taxon>Eukaryota</taxon>
        <taxon>Metazoa</taxon>
        <taxon>Chordata</taxon>
        <taxon>Craniata</taxon>
        <taxon>Vertebrata</taxon>
        <taxon>Euteleostomi</taxon>
        <taxon>Amphibia</taxon>
        <taxon>Batrachia</taxon>
        <taxon>Anura</taxon>
        <taxon>Pipoidea</taxon>
        <taxon>Pipidae</taxon>
        <taxon>Xenopodinae</taxon>
        <taxon>Xenopus</taxon>
        <taxon>Xenopus</taxon>
    </lineage>
</organism>
<comment type="function">
    <text evidence="1">Involved in the renal elimination of endogenous and exogenous organic anions. Mediates the sodium-independent uptake of p-aminohippurate (PAH), 2,3-dimercapto-1-propanesulfonic acid (DMPS), cidofovir, adefovir, 9-(2-phosphonylmethoxyethyl) guanine (PMEG), 9-(2-phosphonylmethoxyethyl) diaminopurine (PMEDAP), ochratoxin (OTA), acyclovir (ACV), 3'-azido-3-'deoxythymidine (AZT), cimetidine (CMD), 2,4-dichloro-phenoxyacetate (2,4-D), hippurate (HA), indoleacetate (IA), indoxyl sulfate (IS) and 3-carboxy-4-methyl-5-propyl-2-furanpropionate (CMPF) and edaravone sulfate. PAH uptake is inhibited by p-chloromercuribenzenesulphonate (PCMBS), diethyl pyrocarbonate (DEPC), indomethacin, sulindac, diclofenac, carprofen, okadaic acid, benzothiazolylcysteine (BTC), S-chlorotrifluoroethylcysteine (CTFC), cysteine S-conjugates S-dichlorovinylcysteine (DCVC), furosemide, steviol, phorbol 12-myristate 13-acetate (PMA), calcium ionophore A23187, benzylpenicillin, bumetamide, losartan, probenecid, phenol red, urate, glutarate and alpha-ketoglutarate (By similarity).</text>
</comment>
<comment type="subcellular location">
    <subcellularLocation>
        <location evidence="3">Cell membrane</location>
        <topology evidence="3">Multi-pass membrane protein</topology>
    </subcellularLocation>
    <subcellularLocation>
        <location evidence="2">Basolateral cell membrane</location>
        <topology evidence="6">Multi-pass membrane protein</topology>
    </subcellularLocation>
    <subcellularLocation>
        <location evidence="2">Basal cell membrane</location>
        <topology evidence="6">Multi-pass membrane protein</topology>
    </subcellularLocation>
</comment>
<comment type="domain">
    <text evidence="1">Multiple cysteine residues are necessary for proper targeting to the plasma membrane.</text>
</comment>
<comment type="PTM">
    <text evidence="1">Glycosylated. Glycosylation is necessary for proper targeting of the transporter to the plasma membrane (By similarity).</text>
</comment>
<comment type="similarity">
    <text evidence="6">Belongs to the major facilitator (TC 2.A.1) superfamily. Organic cation transporter (TC 2.A.1.19) family.</text>
</comment>
<evidence type="ECO:0000250" key="1"/>
<evidence type="ECO:0000250" key="2">
    <source>
        <dbReference type="UniProtKB" id="Q4U2R8"/>
    </source>
</evidence>
<evidence type="ECO:0000250" key="3">
    <source>
        <dbReference type="UniProtKB" id="Q8VC69"/>
    </source>
</evidence>
<evidence type="ECO:0000255" key="4"/>
<evidence type="ECO:0000256" key="5">
    <source>
        <dbReference type="SAM" id="MobiDB-lite"/>
    </source>
</evidence>
<evidence type="ECO:0000305" key="6"/>
<accession>Q66J54</accession>
<gene>
    <name type="primary">slc22a6-a</name>
    <name type="synonym">oat1-a</name>
</gene>
<name>S226A_XENLA</name>
<protein>
    <recommendedName>
        <fullName>Solute carrier family 22 member 6-A</fullName>
    </recommendedName>
    <alternativeName>
        <fullName>Organic cation transporter 1-A</fullName>
    </alternativeName>
    <alternativeName>
        <fullName>Renal organic anion transporter 1-A</fullName>
        <shortName>ROAT1-A</shortName>
    </alternativeName>
</protein>
<feature type="chain" id="PRO_0000324175" description="Solute carrier family 22 member 6-A">
    <location>
        <begin position="1"/>
        <end position="558"/>
    </location>
</feature>
<feature type="topological domain" description="Cytoplasmic" evidence="4">
    <location>
        <begin position="1"/>
        <end position="15"/>
    </location>
</feature>
<feature type="transmembrane region" description="Helical" evidence="4">
    <location>
        <begin position="16"/>
        <end position="36"/>
    </location>
</feature>
<feature type="topological domain" description="Extracellular" evidence="4">
    <location>
        <begin position="37"/>
        <end position="140"/>
    </location>
</feature>
<feature type="transmembrane region" description="Helical" evidence="4">
    <location>
        <begin position="141"/>
        <end position="161"/>
    </location>
</feature>
<feature type="topological domain" description="Cytoplasmic" evidence="4">
    <location>
        <begin position="162"/>
        <end position="167"/>
    </location>
</feature>
<feature type="transmembrane region" description="Helical" evidence="4">
    <location>
        <begin position="168"/>
        <end position="188"/>
    </location>
</feature>
<feature type="topological domain" description="Extracellular" evidence="4">
    <location>
        <begin position="189"/>
        <end position="197"/>
    </location>
</feature>
<feature type="transmembrane region" description="Helical" evidence="4">
    <location>
        <begin position="198"/>
        <end position="218"/>
    </location>
</feature>
<feature type="topological domain" description="Cytoplasmic" evidence="4">
    <location>
        <begin position="219"/>
        <end position="225"/>
    </location>
</feature>
<feature type="transmembrane region" description="Helical" evidence="4">
    <location>
        <begin position="226"/>
        <end position="246"/>
    </location>
</feature>
<feature type="topological domain" description="Extracellular" evidence="4">
    <location>
        <begin position="247"/>
        <end position="253"/>
    </location>
</feature>
<feature type="transmembrane region" description="Helical" evidence="4">
    <location>
        <begin position="254"/>
        <end position="274"/>
    </location>
</feature>
<feature type="topological domain" description="Cytoplasmic" evidence="4">
    <location>
        <begin position="275"/>
        <end position="342"/>
    </location>
</feature>
<feature type="transmembrane region" description="Helical" evidence="4">
    <location>
        <begin position="343"/>
        <end position="363"/>
    </location>
</feature>
<feature type="topological domain" description="Extracellular" evidence="4">
    <location>
        <begin position="364"/>
        <end position="369"/>
    </location>
</feature>
<feature type="transmembrane region" description="Helical" evidence="4">
    <location>
        <begin position="370"/>
        <end position="390"/>
    </location>
</feature>
<feature type="topological domain" description="Cytoplasmic" evidence="4">
    <location>
        <begin position="391"/>
        <end position="400"/>
    </location>
</feature>
<feature type="transmembrane region" description="Helical" evidence="4">
    <location>
        <begin position="401"/>
        <end position="421"/>
    </location>
</feature>
<feature type="topological domain" description="Extracellular" evidence="4">
    <location>
        <begin position="422"/>
        <end position="428"/>
    </location>
</feature>
<feature type="transmembrane region" description="Helical" evidence="4">
    <location>
        <begin position="429"/>
        <end position="449"/>
    </location>
</feature>
<feature type="topological domain" description="Cytoplasmic" evidence="4">
    <location>
        <begin position="450"/>
        <end position="462"/>
    </location>
</feature>
<feature type="transmembrane region" description="Helical" evidence="4">
    <location>
        <begin position="463"/>
        <end position="483"/>
    </location>
</feature>
<feature type="topological domain" description="Extracellular" evidence="4">
    <location>
        <begin position="484"/>
        <end position="488"/>
    </location>
</feature>
<feature type="transmembrane region" description="Helical" evidence="4">
    <location>
        <begin position="489"/>
        <end position="509"/>
    </location>
</feature>
<feature type="topological domain" description="Cytoplasmic" evidence="4">
    <location>
        <begin position="510"/>
        <end position="558"/>
    </location>
</feature>
<feature type="region of interest" description="Disordered" evidence="5">
    <location>
        <begin position="539"/>
        <end position="558"/>
    </location>
</feature>
<feature type="compositionally biased region" description="Basic and acidic residues" evidence="5">
    <location>
        <begin position="539"/>
        <end position="550"/>
    </location>
</feature>